<sequence length="507" mass="56837">MNSFPWLTIIVVFPILTGSLIFLLPHRGNKVMKWYTLCICILELLLTTYTFCYHFQLDDPLTQLTENYKWIHFFDFYWRLGIDGLSIGPILLTGFITTLATLAAWPVTRDAQLFHFLMLAMYSGQIGSFSSRDLLLFFLMWEFELIPVYLLLSMWGGKKRLYSATKFILYTAGGSIFLLIGVLGIGLYGSNEPTLNFETLANQSYPVALEVIFYVGFLIAFAVKLPIIPFHTWLPDTHGEAHYSTCMLLAGILLKMGAYGLVRINMELLPHAHCLFSPGLIIVGAIQIIYAASTSPGQLNLKKRIAYSSISHMGFIIIGIGSLSDTGLNGAILQIISHGFIGAALFFLAGTSYDRIRLLYLDEMGGMAIPLPKLFTMLSILSMASLALPGLSGFVAELLVFFGIITSQKYLLMPKILIAFLMAIGMILTPIYSLSMLRQMFYGYKLFNVPNYYFFDSGPRELFVSISLLLPIIGIGIYPDFVLSLSVEKVEAIISHFFFSIVFKKKE</sequence>
<comment type="catalytic activity">
    <reaction>
        <text>a plastoquinone + NADH + (n+1) H(+)(in) = a plastoquinol + NAD(+) + n H(+)(out)</text>
        <dbReference type="Rhea" id="RHEA:42608"/>
        <dbReference type="Rhea" id="RHEA-COMP:9561"/>
        <dbReference type="Rhea" id="RHEA-COMP:9562"/>
        <dbReference type="ChEBI" id="CHEBI:15378"/>
        <dbReference type="ChEBI" id="CHEBI:17757"/>
        <dbReference type="ChEBI" id="CHEBI:57540"/>
        <dbReference type="ChEBI" id="CHEBI:57945"/>
        <dbReference type="ChEBI" id="CHEBI:62192"/>
    </reaction>
</comment>
<comment type="catalytic activity">
    <reaction>
        <text>a plastoquinone + NADPH + (n+1) H(+)(in) = a plastoquinol + NADP(+) + n H(+)(out)</text>
        <dbReference type="Rhea" id="RHEA:42612"/>
        <dbReference type="Rhea" id="RHEA-COMP:9561"/>
        <dbReference type="Rhea" id="RHEA-COMP:9562"/>
        <dbReference type="ChEBI" id="CHEBI:15378"/>
        <dbReference type="ChEBI" id="CHEBI:17757"/>
        <dbReference type="ChEBI" id="CHEBI:57783"/>
        <dbReference type="ChEBI" id="CHEBI:58349"/>
        <dbReference type="ChEBI" id="CHEBI:62192"/>
    </reaction>
</comment>
<comment type="subcellular location">
    <subcellularLocation>
        <location evidence="3">Plastid</location>
        <location evidence="3">Chloroplast thylakoid membrane</location>
        <topology evidence="3">Multi-pass membrane protein</topology>
    </subcellularLocation>
</comment>
<comment type="RNA editing">
    <location>
        <position position="1" evidence="2"/>
    </location>
    <text>The initiator methionine is created by RNA editing.</text>
</comment>
<comment type="similarity">
    <text evidence="3">Belongs to the complex I subunit 4 family.</text>
</comment>
<organism>
    <name type="scientific">Oenothera elata subsp. hookeri</name>
    <name type="common">Hooker's evening primrose</name>
    <name type="synonym">Oenothera hookeri</name>
    <dbReference type="NCBI Taxonomy" id="85636"/>
    <lineage>
        <taxon>Eukaryota</taxon>
        <taxon>Viridiplantae</taxon>
        <taxon>Streptophyta</taxon>
        <taxon>Embryophyta</taxon>
        <taxon>Tracheophyta</taxon>
        <taxon>Spermatophyta</taxon>
        <taxon>Magnoliopsida</taxon>
        <taxon>eudicotyledons</taxon>
        <taxon>Gunneridae</taxon>
        <taxon>Pentapetalae</taxon>
        <taxon>rosids</taxon>
        <taxon>malvids</taxon>
        <taxon>Myrtales</taxon>
        <taxon>Onagraceae</taxon>
        <taxon>Onagroideae</taxon>
        <taxon>Onagreae</taxon>
        <taxon>Oenothera</taxon>
    </lineage>
</organism>
<dbReference type="EC" id="7.1.1.-"/>
<dbReference type="EMBL" id="AJ271079">
    <property type="protein sequence ID" value="CAB67220.3"/>
    <property type="molecule type" value="Genomic_DNA"/>
</dbReference>
<dbReference type="RefSeq" id="YP_001649207.1">
    <property type="nucleotide sequence ID" value="NC_002693.2"/>
</dbReference>
<dbReference type="SMR" id="P58419"/>
<dbReference type="GeneID" id="802777"/>
<dbReference type="GO" id="GO:0009535">
    <property type="term" value="C:chloroplast thylakoid membrane"/>
    <property type="evidence" value="ECO:0007669"/>
    <property type="project" value="UniProtKB-SubCell"/>
</dbReference>
<dbReference type="GO" id="GO:0008137">
    <property type="term" value="F:NADH dehydrogenase (ubiquinone) activity"/>
    <property type="evidence" value="ECO:0007669"/>
    <property type="project" value="InterPro"/>
</dbReference>
<dbReference type="GO" id="GO:0048039">
    <property type="term" value="F:ubiquinone binding"/>
    <property type="evidence" value="ECO:0007669"/>
    <property type="project" value="TreeGrafter"/>
</dbReference>
<dbReference type="GO" id="GO:0042773">
    <property type="term" value="P:ATP synthesis coupled electron transport"/>
    <property type="evidence" value="ECO:0007669"/>
    <property type="project" value="InterPro"/>
</dbReference>
<dbReference type="GO" id="GO:0015990">
    <property type="term" value="P:electron transport coupled proton transport"/>
    <property type="evidence" value="ECO:0007669"/>
    <property type="project" value="TreeGrafter"/>
</dbReference>
<dbReference type="HAMAP" id="MF_00491">
    <property type="entry name" value="NDH1_NuoM"/>
    <property type="match status" value="1"/>
</dbReference>
<dbReference type="InterPro" id="IPR022997">
    <property type="entry name" value="NADH_Q_OxRdtase_chain4"/>
</dbReference>
<dbReference type="InterPro" id="IPR010227">
    <property type="entry name" value="NADH_Q_OxRdtase_chainM/4"/>
</dbReference>
<dbReference type="InterPro" id="IPR003918">
    <property type="entry name" value="NADH_UbQ_OxRdtase"/>
</dbReference>
<dbReference type="InterPro" id="IPR001750">
    <property type="entry name" value="ND/Mrp_TM"/>
</dbReference>
<dbReference type="NCBIfam" id="TIGR01972">
    <property type="entry name" value="NDH_I_M"/>
    <property type="match status" value="1"/>
</dbReference>
<dbReference type="PANTHER" id="PTHR43507:SF21">
    <property type="entry name" value="NAD(P)H-QUINONE OXIDOREDUCTASE CHAIN 4, CHLOROPLASTIC"/>
    <property type="match status" value="1"/>
</dbReference>
<dbReference type="PANTHER" id="PTHR43507">
    <property type="entry name" value="NADH-UBIQUINONE OXIDOREDUCTASE CHAIN 4"/>
    <property type="match status" value="1"/>
</dbReference>
<dbReference type="Pfam" id="PF00361">
    <property type="entry name" value="Proton_antipo_M"/>
    <property type="match status" value="1"/>
</dbReference>
<dbReference type="PRINTS" id="PR01437">
    <property type="entry name" value="NUOXDRDTASE4"/>
</dbReference>
<accession>P58419</accession>
<gene>
    <name type="primary">ndhD</name>
</gene>
<feature type="chain" id="PRO_0000118022" description="NAD(P)H-quinone oxidoreductase chain 4, chloroplastic">
    <location>
        <begin position="1"/>
        <end position="507"/>
    </location>
</feature>
<feature type="transmembrane region" description="Helical" evidence="1">
    <location>
        <begin position="4"/>
        <end position="24"/>
    </location>
</feature>
<feature type="transmembrane region" description="Helical" evidence="1">
    <location>
        <begin position="37"/>
        <end position="57"/>
    </location>
</feature>
<feature type="transmembrane region" description="Helical" evidence="1">
    <location>
        <begin position="87"/>
        <end position="107"/>
    </location>
</feature>
<feature type="transmembrane region" description="Helical" evidence="1">
    <location>
        <begin position="111"/>
        <end position="131"/>
    </location>
</feature>
<feature type="transmembrane region" description="Helical" evidence="1">
    <location>
        <begin position="134"/>
        <end position="154"/>
    </location>
</feature>
<feature type="transmembrane region" description="Helical" evidence="1">
    <location>
        <begin position="167"/>
        <end position="187"/>
    </location>
</feature>
<feature type="transmembrane region" description="Helical" evidence="1">
    <location>
        <begin position="208"/>
        <end position="228"/>
    </location>
</feature>
<feature type="transmembrane region" description="Helical" evidence="1">
    <location>
        <begin position="242"/>
        <end position="262"/>
    </location>
</feature>
<feature type="transmembrane region" description="Helical" evidence="1">
    <location>
        <begin position="272"/>
        <end position="292"/>
    </location>
</feature>
<feature type="transmembrane region" description="Helical" evidence="1">
    <location>
        <begin position="305"/>
        <end position="325"/>
    </location>
</feature>
<feature type="transmembrane region" description="Helical" evidence="1">
    <location>
        <begin position="330"/>
        <end position="350"/>
    </location>
</feature>
<feature type="transmembrane region" description="Helical" evidence="1">
    <location>
        <begin position="386"/>
        <end position="406"/>
    </location>
</feature>
<feature type="transmembrane region" description="Helical" evidence="1">
    <location>
        <begin position="416"/>
        <end position="436"/>
    </location>
</feature>
<feature type="transmembrane region" description="Helical" evidence="1">
    <location>
        <begin position="462"/>
        <end position="482"/>
    </location>
</feature>
<feature type="transmembrane region" description="Helical" evidence="1">
    <location>
        <begin position="483"/>
        <end position="503"/>
    </location>
</feature>
<geneLocation type="chloroplast"/>
<evidence type="ECO:0000255" key="1"/>
<evidence type="ECO:0000269" key="2">
    <source ref="3"/>
</evidence>
<evidence type="ECO:0000305" key="3"/>
<keyword id="KW-0150">Chloroplast</keyword>
<keyword id="KW-0472">Membrane</keyword>
<keyword id="KW-0520">NAD</keyword>
<keyword id="KW-0521">NADP</keyword>
<keyword id="KW-0934">Plastid</keyword>
<keyword id="KW-0618">Plastoquinone</keyword>
<keyword id="KW-0874">Quinone</keyword>
<keyword id="KW-0691">RNA editing</keyword>
<keyword id="KW-0793">Thylakoid</keyword>
<keyword id="KW-1278">Translocase</keyword>
<keyword id="KW-0812">Transmembrane</keyword>
<keyword id="KW-1133">Transmembrane helix</keyword>
<protein>
    <recommendedName>
        <fullName>NAD(P)H-quinone oxidoreductase chain 4, chloroplastic</fullName>
        <ecNumber>7.1.1.-</ecNumber>
    </recommendedName>
    <alternativeName>
        <fullName>NAD(P)H dehydrogenase, chain 4</fullName>
    </alternativeName>
    <alternativeName>
        <fullName>NADH-plastoquinone oxidoreductase chain 4</fullName>
    </alternativeName>
</protein>
<name>NU4C_OENEH</name>
<proteinExistence type="evidence at transcript level"/>
<reference key="1">
    <citation type="journal article" date="2000" name="Mol. Gen. Genet.">
        <title>Complete nucleotide sequence of the Oenothera elata plastid chromosome, representing plastome I of the five distinguishable Euoenothera plastomes.</title>
        <authorList>
            <person name="Hupfer H."/>
            <person name="Swiatek M."/>
            <person name="Hornung S."/>
            <person name="Herrmann R.G."/>
            <person name="Maier R.M."/>
            <person name="Chiu W.-L."/>
            <person name="Sears B."/>
        </authorList>
    </citation>
    <scope>NUCLEOTIDE SEQUENCE [LARGE SCALE GENOMIC DNA]</scope>
    <source>
        <strain>cv. Johansen</strain>
    </source>
</reference>
<reference key="2">
    <citation type="journal article" date="2008" name="Nucleic Acids Res.">
        <title>The complete nucleotide sequences of the five genetically distinct plastid genomes of Oenothera, subsection Oenothera: I. Sequence evaluation and plastome evolution.</title>
        <authorList>
            <person name="Greiner S."/>
            <person name="Wang X."/>
            <person name="Rauwolf U."/>
            <person name="Silber M.V."/>
            <person name="Mayer K."/>
            <person name="Meurer J."/>
            <person name="Haberer G."/>
            <person name="Herrmann R.G."/>
        </authorList>
    </citation>
    <scope>SEQUENCE REVISION TO 230; 482 AND 500</scope>
</reference>
<reference key="3">
    <citation type="unpublished observations" date="2001-11">
        <authorList>
            <person name="Hupfer H."/>
            <person name="Maier R.M."/>
            <person name="Herrmann R.G."/>
        </authorList>
    </citation>
    <scope>RNA EDITING OF INITIATOR CODON</scope>
    <source>
        <strain>cv. Johansen</strain>
    </source>
</reference>